<organism>
    <name type="scientific">Euscorpiops validus</name>
    <name type="common">Scorpion</name>
    <dbReference type="NCBI Taxonomy" id="1643527"/>
    <lineage>
        <taxon>Eukaryota</taxon>
        <taxon>Metazoa</taxon>
        <taxon>Ecdysozoa</taxon>
        <taxon>Arthropoda</taxon>
        <taxon>Chelicerata</taxon>
        <taxon>Arachnida</taxon>
        <taxon>Scorpiones</taxon>
        <taxon>Iurida</taxon>
        <taxon>Chactoidea</taxon>
        <taxon>Euscorpiidae</taxon>
        <taxon>Scorpiopinae</taxon>
        <taxon>Scorpiopini</taxon>
        <taxon>Euscorpiops</taxon>
    </lineage>
</organism>
<keyword id="KW-0027">Amidation</keyword>
<keyword id="KW-0929">Antimicrobial</keyword>
<keyword id="KW-0165">Cleavage on pair of basic residues</keyword>
<keyword id="KW-0964">Secreted</keyword>
<keyword id="KW-0732">Signal</keyword>
<sequence length="68" mass="7603">MKTQFVVLLVALVLLQMFAQSEAIWGALLSGVADLLGKRGLKNLDDFDDIFDDDLSSADLEFLKQLMR</sequence>
<reference key="1">
    <citation type="journal article" date="2018" name="Theranostics">
        <title>Histidine-rich modification of a scorpion-derived peptide improves bioavailability and inhibitory activity against HSV-1.</title>
        <authorList>
            <person name="Zeng Z."/>
            <person name="Zhang R."/>
            <person name="Hong W."/>
            <person name="Cheng Y."/>
            <person name="Wang H."/>
            <person name="Lang Y."/>
            <person name="Ji Z."/>
            <person name="Wu Y."/>
            <person name="Li W."/>
            <person name="Xie Y."/>
            <person name="Cao Z."/>
        </authorList>
    </citation>
    <scope>NUCLEOTIDE SEQUENCE [MRNA]</scope>
    <scope>SYNTHESIS OF 24-36</scope>
    <scope>PROBABLE AMIDATION AT LEU-36</scope>
    <source>
        <tissue>Venom gland</tissue>
    </source>
</reference>
<dbReference type="GO" id="GO:0005576">
    <property type="term" value="C:extracellular region"/>
    <property type="evidence" value="ECO:0007669"/>
    <property type="project" value="UniProtKB-SubCell"/>
</dbReference>
<name>NDBP5_EUSVA</name>
<evidence type="ECO:0000255" key="1"/>
<evidence type="ECO:0000269" key="2">
    <source>
    </source>
</evidence>
<evidence type="ECO:0000303" key="3">
    <source>
    </source>
</evidence>
<evidence type="ECO:0000305" key="4"/>
<evidence type="ECO:0000305" key="5">
    <source>
    </source>
</evidence>
<feature type="signal peptide" evidence="1">
    <location>
        <begin position="1"/>
        <end position="23"/>
    </location>
</feature>
<feature type="peptide" id="PRO_0000461881" description="Antimicrobial peptide Eval655" evidence="5">
    <location>
        <begin position="24"/>
        <end position="36"/>
    </location>
</feature>
<feature type="propeptide" id="PRO_0000461882" evidence="5">
    <location>
        <begin position="37"/>
        <end position="68"/>
    </location>
</feature>
<feature type="modified residue" description="Leucine amide" evidence="5">
    <location>
        <position position="36"/>
    </location>
</feature>
<comment type="function">
    <text evidence="2">Probable antimicrobial peptide. Shows low inhibitory activity against herpes simplex virus type 1 (HSV-1).</text>
</comment>
<comment type="subcellular location">
    <subcellularLocation>
        <location evidence="5">Secreted</location>
    </subcellularLocation>
</comment>
<comment type="tissue specificity">
    <text evidence="5">Expressed by the venom gland.</text>
</comment>
<comment type="similarity">
    <text evidence="4">Belongs to the non-disulfide-bridged peptide (NDBP) superfamily. Short antimicrobial peptide (group 4) family.</text>
</comment>
<proteinExistence type="evidence at protein level"/>
<protein>
    <recommendedName>
        <fullName evidence="3">Antimicrobial peptide Eval655</fullName>
    </recommendedName>
</protein>
<accession>P0DY02</accession>